<gene>
    <name evidence="1" type="primary">ubiG</name>
    <name type="ordered locus">RL4286</name>
</gene>
<accession>Q1MBA9</accession>
<proteinExistence type="inferred from homology"/>
<feature type="chain" id="PRO_1000013911" description="Ubiquinone biosynthesis O-methyltransferase">
    <location>
        <begin position="1"/>
        <end position="248"/>
    </location>
</feature>
<feature type="binding site" evidence="1">
    <location>
        <position position="41"/>
    </location>
    <ligand>
        <name>S-adenosyl-L-methionine</name>
        <dbReference type="ChEBI" id="CHEBI:59789"/>
    </ligand>
</feature>
<feature type="binding site" evidence="1">
    <location>
        <position position="72"/>
    </location>
    <ligand>
        <name>S-adenosyl-L-methionine</name>
        <dbReference type="ChEBI" id="CHEBI:59789"/>
    </ligand>
</feature>
<feature type="binding site" evidence="1">
    <location>
        <position position="93"/>
    </location>
    <ligand>
        <name>S-adenosyl-L-methionine</name>
        <dbReference type="ChEBI" id="CHEBI:59789"/>
    </ligand>
</feature>
<feature type="binding site" evidence="1">
    <location>
        <position position="136"/>
    </location>
    <ligand>
        <name>S-adenosyl-L-methionine</name>
        <dbReference type="ChEBI" id="CHEBI:59789"/>
    </ligand>
</feature>
<protein>
    <recommendedName>
        <fullName evidence="1">Ubiquinone biosynthesis O-methyltransferase</fullName>
    </recommendedName>
    <alternativeName>
        <fullName evidence="1">2-polyprenyl-6-hydroxyphenol methylase</fullName>
        <ecNumber evidence="1">2.1.1.222</ecNumber>
    </alternativeName>
    <alternativeName>
        <fullName evidence="1">3-demethylubiquinone 3-O-methyltransferase</fullName>
        <ecNumber evidence="1">2.1.1.64</ecNumber>
    </alternativeName>
</protein>
<sequence length="248" mass="27086">MTEGAKSTIDQGEVDRFSAMAAEWWSPTGKFKPLHKFNPVRLAYIRDKACENFSRDPKSARPLEGLRVLDIGCGGGLLSEPVARMGASVVGADPSEKNIGIASTHAKASGVSVDYRAVTAEGLAEAGETFDIVLNMEVVEHVADVEFFMTTCAKMVRPGGLIFVATINRTMKAAALAIFAAENILRWLPRGTHQYEKLVRPEELEEPLVASGLEITDRTGVSFNPLSNQWNLSKDMDVNYMLLAKRPT</sequence>
<evidence type="ECO:0000255" key="1">
    <source>
        <dbReference type="HAMAP-Rule" id="MF_00472"/>
    </source>
</evidence>
<keyword id="KW-0489">Methyltransferase</keyword>
<keyword id="KW-0949">S-adenosyl-L-methionine</keyword>
<keyword id="KW-0808">Transferase</keyword>
<keyword id="KW-0831">Ubiquinone biosynthesis</keyword>
<organism>
    <name type="scientific">Rhizobium johnstonii (strain DSM 114642 / LMG 32736 / 3841)</name>
    <name type="common">Rhizobium leguminosarum bv. viciae</name>
    <dbReference type="NCBI Taxonomy" id="216596"/>
    <lineage>
        <taxon>Bacteria</taxon>
        <taxon>Pseudomonadati</taxon>
        <taxon>Pseudomonadota</taxon>
        <taxon>Alphaproteobacteria</taxon>
        <taxon>Hyphomicrobiales</taxon>
        <taxon>Rhizobiaceae</taxon>
        <taxon>Rhizobium/Agrobacterium group</taxon>
        <taxon>Rhizobium</taxon>
        <taxon>Rhizobium johnstonii</taxon>
    </lineage>
</organism>
<reference key="1">
    <citation type="journal article" date="2006" name="Genome Biol.">
        <title>The genome of Rhizobium leguminosarum has recognizable core and accessory components.</title>
        <authorList>
            <person name="Young J.P.W."/>
            <person name="Crossman L.C."/>
            <person name="Johnston A.W.B."/>
            <person name="Thomson N.R."/>
            <person name="Ghazoui Z.F."/>
            <person name="Hull K.H."/>
            <person name="Wexler M."/>
            <person name="Curson A.R.J."/>
            <person name="Todd J.D."/>
            <person name="Poole P.S."/>
            <person name="Mauchline T.H."/>
            <person name="East A.K."/>
            <person name="Quail M.A."/>
            <person name="Churcher C."/>
            <person name="Arrowsmith C."/>
            <person name="Cherevach I."/>
            <person name="Chillingworth T."/>
            <person name="Clarke K."/>
            <person name="Cronin A."/>
            <person name="Davis P."/>
            <person name="Fraser A."/>
            <person name="Hance Z."/>
            <person name="Hauser H."/>
            <person name="Jagels K."/>
            <person name="Moule S."/>
            <person name="Mungall K."/>
            <person name="Norbertczak H."/>
            <person name="Rabbinowitsch E."/>
            <person name="Sanders M."/>
            <person name="Simmonds M."/>
            <person name="Whitehead S."/>
            <person name="Parkhill J."/>
        </authorList>
    </citation>
    <scope>NUCLEOTIDE SEQUENCE [LARGE SCALE GENOMIC DNA]</scope>
    <source>
        <strain>DSM 114642 / LMG 32736 / 3841</strain>
    </source>
</reference>
<name>UBIG_RHIJ3</name>
<dbReference type="EC" id="2.1.1.222" evidence="1"/>
<dbReference type="EC" id="2.1.1.64" evidence="1"/>
<dbReference type="EMBL" id="AM236080">
    <property type="protein sequence ID" value="CAK09774.1"/>
    <property type="molecule type" value="Genomic_DNA"/>
</dbReference>
<dbReference type="RefSeq" id="WP_011653680.1">
    <property type="nucleotide sequence ID" value="NC_008380.1"/>
</dbReference>
<dbReference type="SMR" id="Q1MBA9"/>
<dbReference type="EnsemblBacteria" id="CAK09774">
    <property type="protein sequence ID" value="CAK09774"/>
    <property type="gene ID" value="RL4286"/>
</dbReference>
<dbReference type="KEGG" id="rle:RL4286"/>
<dbReference type="eggNOG" id="COG2227">
    <property type="taxonomic scope" value="Bacteria"/>
</dbReference>
<dbReference type="HOGENOM" id="CLU_042432_0_0_5"/>
<dbReference type="UniPathway" id="UPA00232"/>
<dbReference type="Proteomes" id="UP000006575">
    <property type="component" value="Chromosome"/>
</dbReference>
<dbReference type="GO" id="GO:0102208">
    <property type="term" value="F:2-polyprenyl-6-hydroxyphenol methylase activity"/>
    <property type="evidence" value="ECO:0007669"/>
    <property type="project" value="UniProtKB-EC"/>
</dbReference>
<dbReference type="GO" id="GO:0061542">
    <property type="term" value="F:3-demethylubiquinol 3-O-methyltransferase activity"/>
    <property type="evidence" value="ECO:0007669"/>
    <property type="project" value="UniProtKB-UniRule"/>
</dbReference>
<dbReference type="GO" id="GO:0010420">
    <property type="term" value="F:polyprenyldihydroxybenzoate methyltransferase activity"/>
    <property type="evidence" value="ECO:0007669"/>
    <property type="project" value="InterPro"/>
</dbReference>
<dbReference type="GO" id="GO:0032259">
    <property type="term" value="P:methylation"/>
    <property type="evidence" value="ECO:0007669"/>
    <property type="project" value="UniProtKB-KW"/>
</dbReference>
<dbReference type="CDD" id="cd02440">
    <property type="entry name" value="AdoMet_MTases"/>
    <property type="match status" value="1"/>
</dbReference>
<dbReference type="Gene3D" id="3.40.50.150">
    <property type="entry name" value="Vaccinia Virus protein VP39"/>
    <property type="match status" value="1"/>
</dbReference>
<dbReference type="HAMAP" id="MF_00472">
    <property type="entry name" value="UbiG"/>
    <property type="match status" value="1"/>
</dbReference>
<dbReference type="InterPro" id="IPR029063">
    <property type="entry name" value="SAM-dependent_MTases_sf"/>
</dbReference>
<dbReference type="InterPro" id="IPR010233">
    <property type="entry name" value="UbiG_MeTrfase"/>
</dbReference>
<dbReference type="NCBIfam" id="TIGR01983">
    <property type="entry name" value="UbiG"/>
    <property type="match status" value="1"/>
</dbReference>
<dbReference type="PANTHER" id="PTHR43464">
    <property type="entry name" value="METHYLTRANSFERASE"/>
    <property type="match status" value="1"/>
</dbReference>
<dbReference type="PANTHER" id="PTHR43464:SF19">
    <property type="entry name" value="UBIQUINONE BIOSYNTHESIS O-METHYLTRANSFERASE, MITOCHONDRIAL"/>
    <property type="match status" value="1"/>
</dbReference>
<dbReference type="Pfam" id="PF13489">
    <property type="entry name" value="Methyltransf_23"/>
    <property type="match status" value="1"/>
</dbReference>
<dbReference type="SUPFAM" id="SSF53335">
    <property type="entry name" value="S-adenosyl-L-methionine-dependent methyltransferases"/>
    <property type="match status" value="1"/>
</dbReference>
<comment type="function">
    <text evidence="1">O-methyltransferase that catalyzes the 2 O-methylation steps in the ubiquinone biosynthetic pathway.</text>
</comment>
<comment type="catalytic activity">
    <reaction evidence="1">
        <text>a 3-demethylubiquinol + S-adenosyl-L-methionine = a ubiquinol + S-adenosyl-L-homocysteine + H(+)</text>
        <dbReference type="Rhea" id="RHEA:44380"/>
        <dbReference type="Rhea" id="RHEA-COMP:9566"/>
        <dbReference type="Rhea" id="RHEA-COMP:10914"/>
        <dbReference type="ChEBI" id="CHEBI:15378"/>
        <dbReference type="ChEBI" id="CHEBI:17976"/>
        <dbReference type="ChEBI" id="CHEBI:57856"/>
        <dbReference type="ChEBI" id="CHEBI:59789"/>
        <dbReference type="ChEBI" id="CHEBI:84422"/>
        <dbReference type="EC" id="2.1.1.64"/>
    </reaction>
</comment>
<comment type="catalytic activity">
    <reaction evidence="1">
        <text>a 3-(all-trans-polyprenyl)benzene-1,2-diol + S-adenosyl-L-methionine = a 2-methoxy-6-(all-trans-polyprenyl)phenol + S-adenosyl-L-homocysteine + H(+)</text>
        <dbReference type="Rhea" id="RHEA:31411"/>
        <dbReference type="Rhea" id="RHEA-COMP:9550"/>
        <dbReference type="Rhea" id="RHEA-COMP:9551"/>
        <dbReference type="ChEBI" id="CHEBI:15378"/>
        <dbReference type="ChEBI" id="CHEBI:57856"/>
        <dbReference type="ChEBI" id="CHEBI:59789"/>
        <dbReference type="ChEBI" id="CHEBI:62729"/>
        <dbReference type="ChEBI" id="CHEBI:62731"/>
        <dbReference type="EC" id="2.1.1.222"/>
    </reaction>
</comment>
<comment type="pathway">
    <text evidence="1">Cofactor biosynthesis; ubiquinone biosynthesis.</text>
</comment>
<comment type="similarity">
    <text evidence="1">Belongs to the methyltransferase superfamily. UbiG/COQ3 family.</text>
</comment>